<accession>P49247</accession>
<accession>Q541P9</accession>
<accession>Q96BJ6</accession>
<name>RPIA_HUMAN</name>
<protein>
    <recommendedName>
        <fullName evidence="3">Ribose-5-phosphate isomerase</fullName>
        <ecNumber evidence="2">5.3.1.6</ecNumber>
    </recommendedName>
    <alternativeName>
        <fullName>Phosphoriboisomerase</fullName>
    </alternativeName>
</protein>
<reference key="1">
    <citation type="submission" date="2001-08" db="EMBL/GenBank/DDBJ databases">
        <title>Cloning and characterization of human ribose 5-phosphate isomerase (RPI) gene.</title>
        <authorList>
            <person name="Guo J.H."/>
            <person name="Yu L."/>
        </authorList>
    </citation>
    <scope>NUCLEOTIDE SEQUENCE [MRNA]</scope>
</reference>
<reference key="2">
    <citation type="journal article" date="2004" name="Genome Res.">
        <title>The status, quality, and expansion of the NIH full-length cDNA project: the Mammalian Gene Collection (MGC).</title>
        <authorList>
            <consortium name="The MGC Project Team"/>
        </authorList>
    </citation>
    <scope>NUCLEOTIDE SEQUENCE [LARGE SCALE MRNA]</scope>
    <source>
        <tissue>Pancreas</tissue>
    </source>
</reference>
<reference key="3">
    <citation type="journal article" date="1995" name="Gene">
        <title>The ribose 5-phosphate isomerase-encoding gene is located immediately downstream from that encoding murine immunoglobulin kappa.</title>
        <authorList>
            <person name="Apel T.W."/>
            <person name="Scherer A."/>
            <person name="Adachi T."/>
            <person name="Auch D."/>
            <person name="Ayane M."/>
            <person name="Reth M."/>
        </authorList>
    </citation>
    <scope>NUCLEOTIDE SEQUENCE [MRNA] OF 186-311</scope>
    <source>
        <tissue>B-cell</tissue>
    </source>
</reference>
<reference key="4">
    <citation type="journal article" date="2011" name="BMC Syst. Biol.">
        <title>Initial characterization of the human central proteome.</title>
        <authorList>
            <person name="Burkard T.R."/>
            <person name="Planyavsky M."/>
            <person name="Kaupe I."/>
            <person name="Breitwieser F.P."/>
            <person name="Buerckstuemmer T."/>
            <person name="Bennett K.L."/>
            <person name="Superti-Furga G."/>
            <person name="Colinge J."/>
        </authorList>
    </citation>
    <scope>IDENTIFICATION BY MASS SPECTROMETRY [LARGE SCALE ANALYSIS]</scope>
</reference>
<reference key="5">
    <citation type="journal article" date="2013" name="J. Proteome Res.">
        <title>Toward a comprehensive characterization of a human cancer cell phosphoproteome.</title>
        <authorList>
            <person name="Zhou H."/>
            <person name="Di Palma S."/>
            <person name="Preisinger C."/>
            <person name="Peng M."/>
            <person name="Polat A.N."/>
            <person name="Heck A.J."/>
            <person name="Mohammed S."/>
        </authorList>
    </citation>
    <scope>PHOSPHORYLATION [LARGE SCALE ANALYSIS] AT SER-106</scope>
    <scope>IDENTIFICATION BY MASS SPECTROMETRY [LARGE SCALE ANALYSIS]</scope>
    <source>
        <tissue>Erythroleukemia</tissue>
    </source>
</reference>
<reference key="6">
    <citation type="journal article" date="2014" name="Mol. Cell. Proteomics">
        <title>Immunoaffinity enrichment and mass spectrometry analysis of protein methylation.</title>
        <authorList>
            <person name="Guo A."/>
            <person name="Gu H."/>
            <person name="Zhou J."/>
            <person name="Mulhern D."/>
            <person name="Wang Y."/>
            <person name="Lee K.A."/>
            <person name="Yang V."/>
            <person name="Aguiar M."/>
            <person name="Kornhauser J."/>
            <person name="Jia X."/>
            <person name="Ren J."/>
            <person name="Beausoleil S.A."/>
            <person name="Silva J.C."/>
            <person name="Vemulapalli V."/>
            <person name="Bedford M.T."/>
            <person name="Comb M.J."/>
        </authorList>
    </citation>
    <scope>METHYLATION [LARGE SCALE ANALYSIS] AT ARG-52</scope>
    <scope>IDENTIFICATION BY MASS SPECTROMETRY [LARGE SCALE ANALYSIS]</scope>
    <source>
        <tissue>Colon carcinoma</tissue>
    </source>
</reference>
<reference key="7">
    <citation type="journal article" date="2004" name="Am. J. Hum. Genet.">
        <title>Ribose-5-phosphate isomerase deficiency: new inborn error in the pentose phosphate pathway associated with a slowly progressive leukoencephalopathy.</title>
        <authorList>
            <person name="Huck J.H.J."/>
            <person name="Verhoeven N.M."/>
            <person name="Struys E.A."/>
            <person name="Salomons G.S."/>
            <person name="Jakobs C."/>
            <person name="van der Knaap M.S."/>
        </authorList>
    </citation>
    <scope>VARIANT RPIAD VAL-135</scope>
    <scope>FUNCTION</scope>
    <scope>CATALYTIC ACTIVITY</scope>
</reference>
<proteinExistence type="evidence at protein level"/>
<dbReference type="EC" id="5.3.1.6" evidence="2"/>
<dbReference type="EMBL" id="AY050633">
    <property type="protein sequence ID" value="AAK95569.1"/>
    <property type="status" value="ALT_FRAME"/>
    <property type="molecule type" value="mRNA"/>
</dbReference>
<dbReference type="EMBL" id="BC015529">
    <property type="protein sequence ID" value="AAH15529.2"/>
    <property type="molecule type" value="mRNA"/>
</dbReference>
<dbReference type="EMBL" id="L35035">
    <property type="status" value="NOT_ANNOTATED_CDS"/>
    <property type="molecule type" value="mRNA"/>
</dbReference>
<dbReference type="CCDS" id="CCDS2004.2"/>
<dbReference type="RefSeq" id="NP_653164.2">
    <property type="nucleotide sequence ID" value="NM_144563.3"/>
</dbReference>
<dbReference type="SMR" id="P49247"/>
<dbReference type="BioGRID" id="116594">
    <property type="interactions" value="67"/>
</dbReference>
<dbReference type="FunCoup" id="P49247">
    <property type="interactions" value="3075"/>
</dbReference>
<dbReference type="IntAct" id="P49247">
    <property type="interactions" value="41"/>
</dbReference>
<dbReference type="MINT" id="P49247"/>
<dbReference type="STRING" id="9606.ENSP00000283646"/>
<dbReference type="DrugBank" id="DB01756">
    <property type="generic name" value="4-phospho-L-threonic acid"/>
</dbReference>
<dbReference type="GlyGen" id="P49247">
    <property type="glycosylation" value="2 sites, 1 O-linked glycan (2 sites)"/>
</dbReference>
<dbReference type="iPTMnet" id="P49247"/>
<dbReference type="PhosphoSitePlus" id="P49247"/>
<dbReference type="BioMuta" id="RPIA"/>
<dbReference type="DMDM" id="156637353"/>
<dbReference type="jPOST" id="P49247"/>
<dbReference type="MassIVE" id="P49247"/>
<dbReference type="PaxDb" id="9606-ENSP00000283646"/>
<dbReference type="PeptideAtlas" id="P49247"/>
<dbReference type="ProteomicsDB" id="55976"/>
<dbReference type="Pumba" id="P49247"/>
<dbReference type="Antibodypedia" id="32248">
    <property type="antibodies" value="165 antibodies from 26 providers"/>
</dbReference>
<dbReference type="DNASU" id="22934"/>
<dbReference type="Ensembl" id="ENST00000283646.5">
    <property type="protein sequence ID" value="ENSP00000283646.3"/>
    <property type="gene ID" value="ENSG00000153574.9"/>
</dbReference>
<dbReference type="GeneID" id="22934"/>
<dbReference type="KEGG" id="hsa:22934"/>
<dbReference type="MANE-Select" id="ENST00000283646.5">
    <property type="protein sequence ID" value="ENSP00000283646.3"/>
    <property type="RefSeq nucleotide sequence ID" value="NM_144563.3"/>
    <property type="RefSeq protein sequence ID" value="NP_653164.2"/>
</dbReference>
<dbReference type="UCSC" id="uc002ste.4">
    <property type="organism name" value="human"/>
</dbReference>
<dbReference type="AGR" id="HGNC:10297"/>
<dbReference type="CTD" id="22934"/>
<dbReference type="DisGeNET" id="22934"/>
<dbReference type="GeneCards" id="RPIA"/>
<dbReference type="HGNC" id="HGNC:10297">
    <property type="gene designation" value="RPIA"/>
</dbReference>
<dbReference type="HPA" id="ENSG00000153574">
    <property type="expression patterns" value="Tissue enhanced (bone)"/>
</dbReference>
<dbReference type="MalaCards" id="RPIA"/>
<dbReference type="MIM" id="180430">
    <property type="type" value="gene"/>
</dbReference>
<dbReference type="MIM" id="608611">
    <property type="type" value="phenotype"/>
</dbReference>
<dbReference type="neXtProt" id="NX_P49247"/>
<dbReference type="OpenTargets" id="ENSG00000153574"/>
<dbReference type="Orphanet" id="440706">
    <property type="disease" value="Ribose-5-P isomerase deficiency"/>
</dbReference>
<dbReference type="PharmGKB" id="PA34659"/>
<dbReference type="VEuPathDB" id="HostDB:ENSG00000153574"/>
<dbReference type="eggNOG" id="KOG3075">
    <property type="taxonomic scope" value="Eukaryota"/>
</dbReference>
<dbReference type="GeneTree" id="ENSGT00390000004352"/>
<dbReference type="HOGENOM" id="CLU_056590_0_2_1"/>
<dbReference type="InParanoid" id="P49247"/>
<dbReference type="OMA" id="ACHVQEK"/>
<dbReference type="OrthoDB" id="1555531at2759"/>
<dbReference type="PAN-GO" id="P49247">
    <property type="GO annotations" value="4 GO annotations based on evolutionary models"/>
</dbReference>
<dbReference type="PhylomeDB" id="P49247"/>
<dbReference type="TreeFam" id="TF105758"/>
<dbReference type="BRENDA" id="5.3.1.6">
    <property type="organism ID" value="2681"/>
</dbReference>
<dbReference type="PathwayCommons" id="P49247"/>
<dbReference type="Reactome" id="R-HSA-5659996">
    <property type="pathway name" value="RPIA deficiency: failed conversion of R5P to RU5P"/>
</dbReference>
<dbReference type="Reactome" id="R-HSA-6791461">
    <property type="pathway name" value="RPIA deficiency: failed conversion of RU5P to R5P"/>
</dbReference>
<dbReference type="Reactome" id="R-HSA-71336">
    <property type="pathway name" value="Pentose phosphate pathway"/>
</dbReference>
<dbReference type="SignaLink" id="P49247"/>
<dbReference type="SIGNOR" id="P49247"/>
<dbReference type="UniPathway" id="UPA00115">
    <property type="reaction ID" value="UER00412"/>
</dbReference>
<dbReference type="BioGRID-ORCS" id="22934">
    <property type="hits" value="250 hits in 1174 CRISPR screens"/>
</dbReference>
<dbReference type="ChiTaRS" id="RPIA">
    <property type="organism name" value="human"/>
</dbReference>
<dbReference type="GenomeRNAi" id="22934"/>
<dbReference type="Pharos" id="P49247">
    <property type="development level" value="Tbio"/>
</dbReference>
<dbReference type="PRO" id="PR:P49247"/>
<dbReference type="Proteomes" id="UP000005640">
    <property type="component" value="Chromosome 2"/>
</dbReference>
<dbReference type="RNAct" id="P49247">
    <property type="molecule type" value="protein"/>
</dbReference>
<dbReference type="Bgee" id="ENSG00000153574">
    <property type="expression patterns" value="Expressed in secondary oocyte and 205 other cell types or tissues"/>
</dbReference>
<dbReference type="GO" id="GO:0005737">
    <property type="term" value="C:cytoplasm"/>
    <property type="evidence" value="ECO:0000318"/>
    <property type="project" value="GO_Central"/>
</dbReference>
<dbReference type="GO" id="GO:0005829">
    <property type="term" value="C:cytosol"/>
    <property type="evidence" value="ECO:0000304"/>
    <property type="project" value="Reactome"/>
</dbReference>
<dbReference type="GO" id="GO:0005739">
    <property type="term" value="C:mitochondrion"/>
    <property type="evidence" value="ECO:0006056"/>
    <property type="project" value="FlyBase"/>
</dbReference>
<dbReference type="GO" id="GO:0042802">
    <property type="term" value="F:identical protein binding"/>
    <property type="evidence" value="ECO:0000353"/>
    <property type="project" value="IntAct"/>
</dbReference>
<dbReference type="GO" id="GO:0048029">
    <property type="term" value="F:monosaccharide binding"/>
    <property type="evidence" value="ECO:0007669"/>
    <property type="project" value="Ensembl"/>
</dbReference>
<dbReference type="GO" id="GO:0004751">
    <property type="term" value="F:ribose-5-phosphate isomerase activity"/>
    <property type="evidence" value="ECO:0000269"/>
    <property type="project" value="Reactome"/>
</dbReference>
<dbReference type="GO" id="GO:0006014">
    <property type="term" value="P:D-ribose metabolic process"/>
    <property type="evidence" value="ECO:0000318"/>
    <property type="project" value="GO_Central"/>
</dbReference>
<dbReference type="GO" id="GO:0006098">
    <property type="term" value="P:pentose-phosphate shunt"/>
    <property type="evidence" value="ECO:0000304"/>
    <property type="project" value="Reactome"/>
</dbReference>
<dbReference type="GO" id="GO:0009052">
    <property type="term" value="P:pentose-phosphate shunt, non-oxidative branch"/>
    <property type="evidence" value="ECO:0000318"/>
    <property type="project" value="GO_Central"/>
</dbReference>
<dbReference type="CDD" id="cd01398">
    <property type="entry name" value="RPI_A"/>
    <property type="match status" value="1"/>
</dbReference>
<dbReference type="FunFam" id="3.40.50.1360:FF:000013">
    <property type="entry name" value="Ribose 5-phosphate isomerase A"/>
    <property type="match status" value="1"/>
</dbReference>
<dbReference type="FunFam" id="3.30.70.260:FF:000018">
    <property type="entry name" value="Ribose-5-phosphate isomerase A"/>
    <property type="match status" value="1"/>
</dbReference>
<dbReference type="Gene3D" id="3.30.70.260">
    <property type="match status" value="1"/>
</dbReference>
<dbReference type="Gene3D" id="3.40.50.1360">
    <property type="match status" value="1"/>
</dbReference>
<dbReference type="HAMAP" id="MF_00170">
    <property type="entry name" value="Rib_5P_isom_A"/>
    <property type="match status" value="1"/>
</dbReference>
<dbReference type="InterPro" id="IPR037171">
    <property type="entry name" value="NagB/RpiA_transferase-like"/>
</dbReference>
<dbReference type="InterPro" id="IPR020672">
    <property type="entry name" value="Ribose5P_isomerase_typA_subgr"/>
</dbReference>
<dbReference type="InterPro" id="IPR004788">
    <property type="entry name" value="Ribose5P_isomerase_type_A"/>
</dbReference>
<dbReference type="NCBIfam" id="NF001924">
    <property type="entry name" value="PRK00702.1"/>
    <property type="match status" value="1"/>
</dbReference>
<dbReference type="NCBIfam" id="TIGR00021">
    <property type="entry name" value="rpiA"/>
    <property type="match status" value="1"/>
</dbReference>
<dbReference type="PANTHER" id="PTHR11934">
    <property type="entry name" value="RIBOSE-5-PHOSPHATE ISOMERASE"/>
    <property type="match status" value="1"/>
</dbReference>
<dbReference type="PANTHER" id="PTHR11934:SF0">
    <property type="entry name" value="RIBOSE-5-PHOSPHATE ISOMERASE"/>
    <property type="match status" value="1"/>
</dbReference>
<dbReference type="Pfam" id="PF06026">
    <property type="entry name" value="Rib_5-P_isom_A"/>
    <property type="match status" value="1"/>
</dbReference>
<dbReference type="SUPFAM" id="SSF75445">
    <property type="entry name" value="D-ribose-5-phosphate isomerase (RpiA), lid domain"/>
    <property type="match status" value="1"/>
</dbReference>
<dbReference type="SUPFAM" id="SSF100950">
    <property type="entry name" value="NagB/RpiA/CoA transferase-like"/>
    <property type="match status" value="1"/>
</dbReference>
<evidence type="ECO:0000256" key="1">
    <source>
        <dbReference type="SAM" id="MobiDB-lite"/>
    </source>
</evidence>
<evidence type="ECO:0000269" key="2">
    <source>
    </source>
</evidence>
<evidence type="ECO:0000305" key="3"/>
<evidence type="ECO:0000305" key="4">
    <source>
    </source>
</evidence>
<evidence type="ECO:0000312" key="5">
    <source>
        <dbReference type="HGNC" id="HGNC:10297"/>
    </source>
</evidence>
<evidence type="ECO:0007744" key="6">
    <source>
    </source>
</evidence>
<evidence type="ECO:0007744" key="7">
    <source>
    </source>
</evidence>
<feature type="chain" id="PRO_0000158521" description="Ribose-5-phosphate isomerase">
    <location>
        <begin position="1"/>
        <end position="311"/>
    </location>
</feature>
<feature type="region of interest" description="Disordered" evidence="1">
    <location>
        <begin position="22"/>
        <end position="67"/>
    </location>
</feature>
<feature type="compositionally biased region" description="Gly residues" evidence="1">
    <location>
        <begin position="22"/>
        <end position="32"/>
    </location>
</feature>
<feature type="compositionally biased region" description="Polar residues" evidence="1">
    <location>
        <begin position="57"/>
        <end position="67"/>
    </location>
</feature>
<feature type="modified residue" description="Omega-N-methylarginine" evidence="7">
    <location>
        <position position="52"/>
    </location>
</feature>
<feature type="modified residue" description="Phosphoserine" evidence="6">
    <location>
        <position position="106"/>
    </location>
</feature>
<feature type="sequence variant" id="VAR_019122" description="In RPIAD; dbSNP:rs121918591." evidence="2">
    <original>A</original>
    <variation>V</variation>
    <location>
        <position position="135"/>
    </location>
</feature>
<feature type="sequence conflict" description="In Ref. 3; L35035." evidence="3" ref="3">
    <original>D</original>
    <variation>V</variation>
    <location>
        <position position="207"/>
    </location>
</feature>
<feature type="sequence conflict" description="In Ref. 3; L35035." evidence="3" ref="3">
    <original>L</original>
    <variation>V</variation>
    <location>
        <position position="239"/>
    </location>
</feature>
<organism>
    <name type="scientific">Homo sapiens</name>
    <name type="common">Human</name>
    <dbReference type="NCBI Taxonomy" id="9606"/>
    <lineage>
        <taxon>Eukaryota</taxon>
        <taxon>Metazoa</taxon>
        <taxon>Chordata</taxon>
        <taxon>Craniata</taxon>
        <taxon>Vertebrata</taxon>
        <taxon>Euteleostomi</taxon>
        <taxon>Mammalia</taxon>
        <taxon>Eutheria</taxon>
        <taxon>Euarchontoglires</taxon>
        <taxon>Primates</taxon>
        <taxon>Haplorrhini</taxon>
        <taxon>Catarrhini</taxon>
        <taxon>Hominidae</taxon>
        <taxon>Homo</taxon>
    </lineage>
</organism>
<keyword id="KW-0225">Disease variant</keyword>
<keyword id="KW-0413">Isomerase</keyword>
<keyword id="KW-0488">Methylation</keyword>
<keyword id="KW-0622">Neuropathy</keyword>
<keyword id="KW-0597">Phosphoprotein</keyword>
<keyword id="KW-1267">Proteomics identification</keyword>
<keyword id="KW-1185">Reference proteome</keyword>
<comment type="function">
    <text evidence="2">Catalyzes the reversible conversion of ribose-5-phosphate to ribulose 5-phosphate and participates in the first step of the non-oxidative branch of the pentose phosphate pathway.</text>
</comment>
<comment type="catalytic activity">
    <reaction evidence="2">
        <text>aldehydo-D-ribose 5-phosphate = D-ribulose 5-phosphate</text>
        <dbReference type="Rhea" id="RHEA:14657"/>
        <dbReference type="ChEBI" id="CHEBI:58121"/>
        <dbReference type="ChEBI" id="CHEBI:58273"/>
        <dbReference type="EC" id="5.3.1.6"/>
    </reaction>
    <physiologicalReaction direction="left-to-right" evidence="4">
        <dbReference type="Rhea" id="RHEA:14658"/>
    </physiologicalReaction>
    <physiologicalReaction direction="right-to-left" evidence="4">
        <dbReference type="Rhea" id="RHEA:14659"/>
    </physiologicalReaction>
</comment>
<comment type="pathway">
    <text evidence="2">Carbohydrate degradation; pentose phosphate pathway; D-ribose 5-phosphate from D-ribulose 5-phosphate (non-oxidative stage): step 1/1.</text>
</comment>
<comment type="interaction">
    <interactant intactId="EBI-744831">
        <id>P49247</id>
    </interactant>
    <interactant intactId="EBI-1166928">
        <id>Q8N5M1</id>
        <label>ATPAF2</label>
    </interactant>
    <organismsDiffer>false</organismsDiffer>
    <experiments>12</experiments>
</comment>
<comment type="interaction">
    <interactant intactId="EBI-744831">
        <id>P49247</id>
    </interactant>
    <interactant intactId="EBI-725606">
        <id>Q9NWQ9</id>
        <label>C14orf119</label>
    </interactant>
    <organismsDiffer>false</organismsDiffer>
    <experiments>3</experiments>
</comment>
<comment type="interaction">
    <interactant intactId="EBI-744831">
        <id>P49247</id>
    </interactant>
    <interactant intactId="EBI-10250303">
        <id>Q6IPU0</id>
        <label>CENPP</label>
    </interactant>
    <organismsDiffer>false</organismsDiffer>
    <experiments>8</experiments>
</comment>
<comment type="interaction">
    <interactant intactId="EBI-744831">
        <id>P49247</id>
    </interactant>
    <interactant intactId="EBI-742054">
        <id>Q96D03</id>
        <label>DDIT4L</label>
    </interactant>
    <organismsDiffer>false</organismsDiffer>
    <experiments>3</experiments>
</comment>
<comment type="interaction">
    <interactant intactId="EBI-744831">
        <id>P49247</id>
    </interactant>
    <interactant intactId="EBI-10255915">
        <id>Q75MZ5</id>
        <label>FOXP2</label>
    </interactant>
    <organismsDiffer>false</organismsDiffer>
    <experiments>4</experiments>
</comment>
<comment type="interaction">
    <interactant intactId="EBI-744831">
        <id>P49247</id>
    </interactant>
    <interactant intactId="EBI-739467">
        <id>Q9H8Y8</id>
        <label>GORASP2</label>
    </interactant>
    <organismsDiffer>false</organismsDiffer>
    <experiments>8</experiments>
</comment>
<comment type="interaction">
    <interactant intactId="EBI-744831">
        <id>P49247</id>
    </interactant>
    <interactant intactId="EBI-739074">
        <id>Q9UJY1</id>
        <label>HSPB8</label>
    </interactant>
    <organismsDiffer>false</organismsDiffer>
    <experiments>3</experiments>
</comment>
<comment type="interaction">
    <interactant intactId="EBI-744831">
        <id>P49247</id>
    </interactant>
    <interactant intactId="EBI-739832">
        <id>Q8TBB1</id>
        <label>LNX1</label>
    </interactant>
    <organismsDiffer>false</organismsDiffer>
    <experiments>5</experiments>
</comment>
<comment type="interaction">
    <interactant intactId="EBI-744831">
        <id>P49247</id>
    </interactant>
    <interactant intactId="EBI-741158">
        <id>Q96HA8</id>
        <label>NTAQ1</label>
    </interactant>
    <organismsDiffer>false</organismsDiffer>
    <experiments>8</experiments>
</comment>
<comment type="interaction">
    <interactant intactId="EBI-744831">
        <id>P49247</id>
    </interactant>
    <interactant intactId="EBI-353343">
        <id>P22061</id>
        <label>PCMT1</label>
    </interactant>
    <organismsDiffer>false</organismsDiffer>
    <experiments>4</experiments>
</comment>
<comment type="interaction">
    <interactant intactId="EBI-744831">
        <id>P49247</id>
    </interactant>
    <interactant intactId="EBI-12386584">
        <id>P22061-2</id>
        <label>PCMT1</label>
    </interactant>
    <organismsDiffer>false</organismsDiffer>
    <experiments>4</experiments>
</comment>
<comment type="interaction">
    <interactant intactId="EBI-744831">
        <id>P49247</id>
    </interactant>
    <interactant intactId="EBI-79165">
        <id>Q9NRD5</id>
        <label>PICK1</label>
    </interactant>
    <organismsDiffer>false</organismsDiffer>
    <experiments>3</experiments>
</comment>
<comment type="interaction">
    <interactant intactId="EBI-744831">
        <id>P49247</id>
    </interactant>
    <interactant intactId="EBI-297779">
        <id>Q06124</id>
        <label>PTPN11</label>
    </interactant>
    <organismsDiffer>false</organismsDiffer>
    <experiments>4</experiments>
</comment>
<comment type="interaction">
    <interactant intactId="EBI-744831">
        <id>P49247</id>
    </interactant>
    <interactant intactId="EBI-751555">
        <id>Q9H0X6</id>
        <label>RNF208</label>
    </interactant>
    <organismsDiffer>false</organismsDiffer>
    <experiments>3</experiments>
</comment>
<comment type="interaction">
    <interactant intactId="EBI-744831">
        <id>P49247</id>
    </interactant>
    <interactant intactId="EBI-744831">
        <id>P49247</id>
        <label>RPIA</label>
    </interactant>
    <organismsDiffer>false</organismsDiffer>
    <experiments>4</experiments>
</comment>
<comment type="interaction">
    <interactant intactId="EBI-744831">
        <id>P49247</id>
    </interactant>
    <interactant intactId="EBI-727004">
        <id>O00560</id>
        <label>SDCBP</label>
    </interactant>
    <organismsDiffer>false</organismsDiffer>
    <experiments>3</experiments>
</comment>
<comment type="interaction">
    <interactant intactId="EBI-744831">
        <id>P49247</id>
    </interactant>
    <interactant intactId="EBI-749295">
        <id>O75716</id>
        <label>STK16</label>
    </interactant>
    <organismsDiffer>false</organismsDiffer>
    <experiments>4</experiments>
</comment>
<comment type="interaction">
    <interactant intactId="EBI-744831">
        <id>P49247</id>
    </interactant>
    <interactant intactId="EBI-2932492">
        <id>Q99757</id>
        <label>TXN2</label>
    </interactant>
    <organismsDiffer>false</organismsDiffer>
    <experiments>6</experiments>
</comment>
<comment type="disease" evidence="2">
    <disease id="DI-02268">
        <name>Ribose 5-phosphate isomerase deficiency</name>
        <acronym>RPIAD</acronym>
        <description>An autosomal recessive inborn error of polyols metabolism characterized by highly elevated level of ribitol and arabitol in brain and body fluids. Clinical features include leukoencephalopathy, psychomotor retardation from early life, neurologic regression, and a mild sensorimotor neuropathy.</description>
        <dbReference type="MIM" id="608611"/>
    </disease>
    <text>The disease is caused by variants affecting the gene represented in this entry.</text>
</comment>
<comment type="similarity">
    <text evidence="3">Belongs to the ribose 5-phosphate isomerase family.</text>
</comment>
<comment type="sequence caution" evidence="3">
    <conflict type="frameshift">
        <sequence resource="EMBL-CDS" id="AAK95569"/>
    </conflict>
</comment>
<gene>
    <name evidence="5" type="primary">RPIA</name>
    <name type="synonym">RPI</name>
</gene>
<sequence length="311" mass="33269">MQRPGPFSTLYGRVLAPLPGRAGGAASGGGGNSWDLPGSHVRLPGRAQSGTRGGAGNTSTSCGDSNSICPAPSTMSKAEEAKKLAGRAAVENHVRNNQVLGIGSGSTIVHAVQRIAERVKQENLNLVCIPTSFQARQLILQYGLTLSDLDRHPEIDLAIDGADEVDADLNLIKGGGGCLTQEKIVAGYASRFIVIADFRKDSKNLGDQWHKGIPIEVIPMAYVPVSRAVSQKFGGVVELRMAVNKAGPVVTDNGNFILDWKFDRVHKWSEVNTAIKMIPGVVDTGLFINMAERVYFGMQDGSVNMREKPFC</sequence>